<comment type="function">
    <text evidence="2">Involved in starch metabolism in endosperm (PubMed:31548423). Acts as a modifier of SUGARY1 (SU1), an isoamylase starch-debranching enzyme involved in amylopectin biosynthesis in endosperm (PubMed:31548423).</text>
</comment>
<comment type="similarity">
    <text evidence="4">Belongs to the fantastic four family.</text>
</comment>
<sequence>MIRPAPWVGAGHRGRGGEAGACTESLGSESGDVGCDAAEIDQFFPPAPAAGGPDDAGAEPCIPDLAAAAAAGKRRRGGFPPPMPRASGPLFLRAERRGGRLILTEVRADERERRVVFRAERDGGRLRLRFANDGDGPEAAGGGGGAGGGGGELCQVAAGRRGVQVGAVMMGAI</sequence>
<reference key="1">
    <citation type="journal article" date="2009" name="Science">
        <title>The B73 maize genome: complexity, diversity, and dynamics.</title>
        <authorList>
            <person name="Schnable P.S."/>
            <person name="Ware D."/>
            <person name="Fulton R.S."/>
            <person name="Stein J.C."/>
            <person name="Wei F."/>
            <person name="Pasternak S."/>
            <person name="Liang C."/>
            <person name="Zhang J."/>
            <person name="Fulton L."/>
            <person name="Graves T.A."/>
            <person name="Minx P."/>
            <person name="Reily A.D."/>
            <person name="Courtney L."/>
            <person name="Kruchowski S.S."/>
            <person name="Tomlinson C."/>
            <person name="Strong C."/>
            <person name="Delehaunty K."/>
            <person name="Fronick C."/>
            <person name="Courtney B."/>
            <person name="Rock S.M."/>
            <person name="Belter E."/>
            <person name="Du F."/>
            <person name="Kim K."/>
            <person name="Abbott R.M."/>
            <person name="Cotton M."/>
            <person name="Levy A."/>
            <person name="Marchetto P."/>
            <person name="Ochoa K."/>
            <person name="Jackson S.M."/>
            <person name="Gillam B."/>
            <person name="Chen W."/>
            <person name="Yan L."/>
            <person name="Higginbotham J."/>
            <person name="Cardenas M."/>
            <person name="Waligorski J."/>
            <person name="Applebaum E."/>
            <person name="Phelps L."/>
            <person name="Falcone J."/>
            <person name="Kanchi K."/>
            <person name="Thane T."/>
            <person name="Scimone A."/>
            <person name="Thane N."/>
            <person name="Henke J."/>
            <person name="Wang T."/>
            <person name="Ruppert J."/>
            <person name="Shah N."/>
            <person name="Rotter K."/>
            <person name="Hodges J."/>
            <person name="Ingenthron E."/>
            <person name="Cordes M."/>
            <person name="Kohlberg S."/>
            <person name="Sgro J."/>
            <person name="Delgado B."/>
            <person name="Mead K."/>
            <person name="Chinwalla A."/>
            <person name="Leonard S."/>
            <person name="Crouse K."/>
            <person name="Collura K."/>
            <person name="Kudrna D."/>
            <person name="Currie J."/>
            <person name="He R."/>
            <person name="Angelova A."/>
            <person name="Rajasekar S."/>
            <person name="Mueller T."/>
            <person name="Lomeli R."/>
            <person name="Scara G."/>
            <person name="Ko A."/>
            <person name="Delaney K."/>
            <person name="Wissotski M."/>
            <person name="Lopez G."/>
            <person name="Campos D."/>
            <person name="Braidotti M."/>
            <person name="Ashley E."/>
            <person name="Golser W."/>
            <person name="Kim H."/>
            <person name="Lee S."/>
            <person name="Lin J."/>
            <person name="Dujmic Z."/>
            <person name="Kim W."/>
            <person name="Talag J."/>
            <person name="Zuccolo A."/>
            <person name="Fan C."/>
            <person name="Sebastian A."/>
            <person name="Kramer M."/>
            <person name="Spiegel L."/>
            <person name="Nascimento L."/>
            <person name="Zutavern T."/>
            <person name="Miller B."/>
            <person name="Ambroise C."/>
            <person name="Muller S."/>
            <person name="Spooner W."/>
            <person name="Narechania A."/>
            <person name="Ren L."/>
            <person name="Wei S."/>
            <person name="Kumari S."/>
            <person name="Faga B."/>
            <person name="Levy M.J."/>
            <person name="McMahan L."/>
            <person name="Van Buren P."/>
            <person name="Vaughn M.W."/>
            <person name="Ying K."/>
            <person name="Yeh C.-T."/>
            <person name="Emrich S.J."/>
            <person name="Jia Y."/>
            <person name="Kalyanaraman A."/>
            <person name="Hsia A.-P."/>
            <person name="Barbazuk W.B."/>
            <person name="Baucom R.S."/>
            <person name="Brutnell T.P."/>
            <person name="Carpita N.C."/>
            <person name="Chaparro C."/>
            <person name="Chia J.-M."/>
            <person name="Deragon J.-M."/>
            <person name="Estill J.C."/>
            <person name="Fu Y."/>
            <person name="Jeddeloh J.A."/>
            <person name="Han Y."/>
            <person name="Lee H."/>
            <person name="Li P."/>
            <person name="Lisch D.R."/>
            <person name="Liu S."/>
            <person name="Liu Z."/>
            <person name="Nagel D.H."/>
            <person name="McCann M.C."/>
            <person name="SanMiguel P."/>
            <person name="Myers A.M."/>
            <person name="Nettleton D."/>
            <person name="Nguyen J."/>
            <person name="Penning B.W."/>
            <person name="Ponnala L."/>
            <person name="Schneider K.L."/>
            <person name="Schwartz D.C."/>
            <person name="Sharma A."/>
            <person name="Soderlund C."/>
            <person name="Springer N.M."/>
            <person name="Sun Q."/>
            <person name="Wang H."/>
            <person name="Waterman M."/>
            <person name="Westerman R."/>
            <person name="Wolfgruber T.K."/>
            <person name="Yang L."/>
            <person name="Yu Y."/>
            <person name="Zhang L."/>
            <person name="Zhou S."/>
            <person name="Zhu Q."/>
            <person name="Bennetzen J.L."/>
            <person name="Dawe R.K."/>
            <person name="Jiang J."/>
            <person name="Jiang N."/>
            <person name="Presting G.G."/>
            <person name="Wessler S.R."/>
            <person name="Aluru S."/>
            <person name="Martienssen R.A."/>
            <person name="Clifton S.W."/>
            <person name="McCombie W.R."/>
            <person name="Wing R.A."/>
            <person name="Wilson R.K."/>
        </authorList>
    </citation>
    <scope>NUCLEOTIDE SEQUENCE [LARGE SCALE GENOMIC DNA]</scope>
    <source>
        <strain>cv. B73</strain>
    </source>
</reference>
<reference key="2">
    <citation type="journal article" date="2018" name="Nat. Genet.">
        <title>Extensive intraspecific gene order and gene structural variations between Mo17 and other maize genomes.</title>
        <authorList>
            <person name="Sun S."/>
            <person name="Zhou Y."/>
            <person name="Chen J."/>
            <person name="Shi J."/>
            <person name="Zhao H."/>
            <person name="Zhao H."/>
            <person name="Song W."/>
            <person name="Zhang M."/>
            <person name="Cui Y."/>
            <person name="Dong X."/>
            <person name="Liu H."/>
            <person name="Ma X."/>
            <person name="Jiao Y."/>
            <person name="Wang B."/>
            <person name="Wei X."/>
            <person name="Stein J.C."/>
            <person name="Glaubitz J.C."/>
            <person name="Lu F."/>
            <person name="Yu G."/>
            <person name="Liang C."/>
            <person name="Fengler K."/>
            <person name="Li B."/>
            <person name="Rafalski A."/>
            <person name="Schnable P.S."/>
            <person name="Ware D.H."/>
            <person name="Buckler E.S."/>
            <person name="Lai J."/>
        </authorList>
    </citation>
    <scope>NUCLEOTIDE SEQUENCE [LARGE SCALE GENOMIC DNA]</scope>
    <source>
        <strain>cv. Missouri 17</strain>
    </source>
</reference>
<reference key="3">
    <citation type="journal article" date="2019" name="Proc. Natl. Acad. Sci. U.S.A.">
        <title>Maize sugary enhancer1 (se1) is a gene affecting endosperm starch metabolism.</title>
        <authorList>
            <person name="Zhang X."/>
            <person name="Mogel K.J.H.V."/>
            <person name="Lor V.S."/>
            <person name="Hirsch C.N."/>
            <person name="De Vries B."/>
            <person name="Kaeppler H.F."/>
            <person name="Tracy W.F."/>
            <person name="Kaeppler S.M."/>
        </authorList>
    </citation>
    <scope>FUNCTION</scope>
</reference>
<gene>
    <name evidence="3" type="primary">SE1</name>
    <name evidence="5" type="ORF">ZEAMMB73_Zm00001d007657</name>
</gene>
<name>SE1_MAIZE</name>
<protein>
    <recommendedName>
        <fullName evidence="3">Protein SUGARY ENHANCER 1</fullName>
    </recommendedName>
</protein>
<feature type="chain" id="PRO_0000455588" description="Protein SUGARY ENHANCER 1">
    <location>
        <begin position="1"/>
        <end position="173"/>
    </location>
</feature>
<feature type="region of interest" description="Disordered" evidence="1">
    <location>
        <begin position="1"/>
        <end position="31"/>
    </location>
</feature>
<evidence type="ECO:0000256" key="1">
    <source>
        <dbReference type="SAM" id="MobiDB-lite"/>
    </source>
</evidence>
<evidence type="ECO:0000269" key="2">
    <source>
    </source>
</evidence>
<evidence type="ECO:0000303" key="3">
    <source>
    </source>
</evidence>
<evidence type="ECO:0000305" key="4"/>
<evidence type="ECO:0000312" key="5">
    <source>
        <dbReference type="EMBL" id="ONM27298.1"/>
    </source>
</evidence>
<proteinExistence type="inferred from homology"/>
<dbReference type="EMBL" id="CM007648">
    <property type="protein sequence ID" value="ONM27298.1"/>
    <property type="molecule type" value="Genomic_DNA"/>
</dbReference>
<dbReference type="RefSeq" id="XP_008670885.1">
    <property type="nucleotide sequence ID" value="XM_008672663.1"/>
</dbReference>
<dbReference type="FunCoup" id="A0A1D6F7U7">
    <property type="interactions" value="1015"/>
</dbReference>
<dbReference type="STRING" id="4577.A0A1D6F7U7"/>
<dbReference type="PaxDb" id="4577-AC217415.3_FGP004"/>
<dbReference type="EnsemblPlants" id="Zm00001eb115450_T001">
    <property type="protein sequence ID" value="Zm00001eb115450_P001"/>
    <property type="gene ID" value="Zm00001eb115450"/>
</dbReference>
<dbReference type="Gramene" id="Zm00001eb115450_T001">
    <property type="protein sequence ID" value="Zm00001eb115450_P001"/>
    <property type="gene ID" value="Zm00001eb115450"/>
</dbReference>
<dbReference type="MaizeGDB" id="9031395"/>
<dbReference type="eggNOG" id="ENOG502R63B">
    <property type="taxonomic scope" value="Eukaryota"/>
</dbReference>
<dbReference type="InParanoid" id="A0A1D6F7U7"/>
<dbReference type="OMA" id="AGMVEHQ"/>
<dbReference type="Proteomes" id="UP000007305">
    <property type="component" value="Chromosome 2"/>
</dbReference>
<dbReference type="ExpressionAtlas" id="A0A1D6F7U7">
    <property type="expression patterns" value="baseline"/>
</dbReference>
<dbReference type="GO" id="GO:2000904">
    <property type="term" value="P:regulation of starch metabolic process"/>
    <property type="evidence" value="ECO:0000315"/>
    <property type="project" value="UniProtKB"/>
</dbReference>
<dbReference type="InterPro" id="IPR021410">
    <property type="entry name" value="FAF"/>
</dbReference>
<dbReference type="InterPro" id="IPR046431">
    <property type="entry name" value="FAF_dom"/>
</dbReference>
<dbReference type="PANTHER" id="PTHR33155">
    <property type="entry name" value="FANTASTIC FOUR-LIKE PROTEIN (DUF3049)"/>
    <property type="match status" value="1"/>
</dbReference>
<dbReference type="PANTHER" id="PTHR33155:SF7">
    <property type="entry name" value="PROTEIN SUGARY ENHANCER 1"/>
    <property type="match status" value="1"/>
</dbReference>
<dbReference type="Pfam" id="PF11250">
    <property type="entry name" value="FAF"/>
    <property type="match status" value="1"/>
</dbReference>
<accession>A0A1D6F7U7</accession>
<keyword id="KW-1185">Reference proteome</keyword>
<organism>
    <name type="scientific">Zea mays</name>
    <name type="common">Maize</name>
    <dbReference type="NCBI Taxonomy" id="4577"/>
    <lineage>
        <taxon>Eukaryota</taxon>
        <taxon>Viridiplantae</taxon>
        <taxon>Streptophyta</taxon>
        <taxon>Embryophyta</taxon>
        <taxon>Tracheophyta</taxon>
        <taxon>Spermatophyta</taxon>
        <taxon>Magnoliopsida</taxon>
        <taxon>Liliopsida</taxon>
        <taxon>Poales</taxon>
        <taxon>Poaceae</taxon>
        <taxon>PACMAD clade</taxon>
        <taxon>Panicoideae</taxon>
        <taxon>Andropogonodae</taxon>
        <taxon>Andropogoneae</taxon>
        <taxon>Tripsacinae</taxon>
        <taxon>Zea</taxon>
    </lineage>
</organism>